<evidence type="ECO:0000255" key="1">
    <source>
        <dbReference type="HAMAP-Rule" id="MF_00764"/>
    </source>
</evidence>
<comment type="similarity">
    <text evidence="1">Belongs to the UPF0306 family.</text>
</comment>
<accession>B6I1M9</accession>
<name>YHBP_ECOSE</name>
<sequence>METLIAISRWLAKQHVVTWCVQQEGELWCANAFYLFDAQKVAFYILTEEKTRHAQMSGPQAAVAGTVNGQPKTVALIRGVQFKGEIRRLEGEESDLARKAYNRRFPVARMLSAPVWEIRLDEIKFTDNTLGFGKKMIWLRDSGTEQA</sequence>
<reference key="1">
    <citation type="journal article" date="2008" name="DNA Res.">
        <title>Complete genome sequence and comparative analysis of the wild-type commensal Escherichia coli strain SE11 isolated from a healthy adult.</title>
        <authorList>
            <person name="Oshima K."/>
            <person name="Toh H."/>
            <person name="Ogura Y."/>
            <person name="Sasamoto H."/>
            <person name="Morita H."/>
            <person name="Park S.-H."/>
            <person name="Ooka T."/>
            <person name="Iyoda S."/>
            <person name="Taylor T.D."/>
            <person name="Hayashi T."/>
            <person name="Itoh K."/>
            <person name="Hattori M."/>
        </authorList>
    </citation>
    <scope>NUCLEOTIDE SEQUENCE [LARGE SCALE GENOMIC DNA]</scope>
    <source>
        <strain>SE11</strain>
    </source>
</reference>
<organism>
    <name type="scientific">Escherichia coli (strain SE11)</name>
    <dbReference type="NCBI Taxonomy" id="409438"/>
    <lineage>
        <taxon>Bacteria</taxon>
        <taxon>Pseudomonadati</taxon>
        <taxon>Pseudomonadota</taxon>
        <taxon>Gammaproteobacteria</taxon>
        <taxon>Enterobacterales</taxon>
        <taxon>Enterobacteriaceae</taxon>
        <taxon>Escherichia</taxon>
    </lineage>
</organism>
<dbReference type="EMBL" id="AP009240">
    <property type="protein sequence ID" value="BAG78964.1"/>
    <property type="molecule type" value="Genomic_DNA"/>
</dbReference>
<dbReference type="RefSeq" id="WP_000449030.1">
    <property type="nucleotide sequence ID" value="NC_011415.1"/>
</dbReference>
<dbReference type="SMR" id="B6I1M9"/>
<dbReference type="KEGG" id="ecy:ECSE_3440"/>
<dbReference type="HOGENOM" id="CLU_105087_3_0_6"/>
<dbReference type="Proteomes" id="UP000008199">
    <property type="component" value="Chromosome"/>
</dbReference>
<dbReference type="FunFam" id="2.30.110.10:FF:000003">
    <property type="entry name" value="UPF0306 protein YhbP"/>
    <property type="match status" value="1"/>
</dbReference>
<dbReference type="Gene3D" id="2.30.110.10">
    <property type="entry name" value="Electron Transport, Fmn-binding Protein, Chain A"/>
    <property type="match status" value="1"/>
</dbReference>
<dbReference type="HAMAP" id="MF_00764">
    <property type="entry name" value="UPF0306"/>
    <property type="match status" value="1"/>
</dbReference>
<dbReference type="InterPro" id="IPR012349">
    <property type="entry name" value="Split_barrel_FMN-bd"/>
</dbReference>
<dbReference type="InterPro" id="IPR011194">
    <property type="entry name" value="UPF0306"/>
</dbReference>
<dbReference type="NCBIfam" id="NF002900">
    <property type="entry name" value="PRK03467.1"/>
    <property type="match status" value="1"/>
</dbReference>
<dbReference type="PIRSF" id="PIRSF009554">
    <property type="entry name" value="UCP009554"/>
    <property type="match status" value="1"/>
</dbReference>
<dbReference type="SUPFAM" id="SSF50475">
    <property type="entry name" value="FMN-binding split barrel"/>
    <property type="match status" value="1"/>
</dbReference>
<protein>
    <recommendedName>
        <fullName evidence="1">UPF0306 protein YhbP</fullName>
    </recommendedName>
</protein>
<feature type="chain" id="PRO_1000198352" description="UPF0306 protein YhbP">
    <location>
        <begin position="1"/>
        <end position="147"/>
    </location>
</feature>
<gene>
    <name evidence="1" type="primary">yhbP</name>
    <name type="ordered locus">ECSE_3440</name>
</gene>
<proteinExistence type="inferred from homology"/>